<sequence>MRFFVSCAKGLEYLLVDEVLALGAAGATATVAGVNVEGGLCDAQRLVLWSRLASRVLWPLAAFACADEDALYAGVAALPWVEHVLPGQTLAVDAHVSGEAITHARYAAQRVKDAVVDTLRDAGVVRPSVDVEHPDVRLNLSLRKGRATLSVDLGGRALHHRGWRQAPHAASLKEHLAAAVLLRAGWAKVYAEGGGLLDPMCGSGTLLIEGALMVADVAPGLSRYADPDAMSHVSVAERPVLLPSRWRGFDVVAWEALVVDAQQRARRGLAELRPVLHGSDIDPRALGAASANARAAGVQDAIEFVVAGIDVLPAVSEPHGVVVCNAPYDVRLAADPGLYRHLGDALRRVVPRWRAALVCGSNTLAFATGLRAGKRYQFFNGALECVLIVCDPVVPLAREAGGAQALSEGAQMAANRLRKNVQRLKKWRIRAGVECYRVYDADLPEYAAAIDVYQEVDGARRLFLHVQEYAAPTSIPEGDVRRRRHELLAAVRAVFDVSVAQVALKTRQRGKGGSQYGCFAQRGEFFHVCEHGALLRVNLFDYLDTGLFLDHRPLRGRMAREAVGKRFLNVFCYTGVASVEAAVAGAAATTSVDLSSTYLHWCTDNFALNGQGGVRHRLVQADALAWLEAERGQYDVIFCDPPTFSNSARADDFDVQRDHVRLLRAAVARLTPGGVLYFSNNFRRFRLDVDAVAAFAQCEEISSVTIDLDFSRNTRIHRTWLLWR</sequence>
<feature type="chain" id="PRO_0000366862" description="Ribosomal RNA large subunit methyltransferase K/L">
    <location>
        <begin position="1"/>
        <end position="724"/>
    </location>
</feature>
<feature type="domain" description="THUMP" evidence="1">
    <location>
        <begin position="42"/>
        <end position="153"/>
    </location>
</feature>
<accession>B0U5Z5</accession>
<dbReference type="EC" id="2.1.1.173" evidence="1"/>
<dbReference type="EC" id="2.1.1.264" evidence="1"/>
<dbReference type="EMBL" id="CP000941">
    <property type="protein sequence ID" value="ACA13067.1"/>
    <property type="molecule type" value="Genomic_DNA"/>
</dbReference>
<dbReference type="RefSeq" id="WP_012338118.1">
    <property type="nucleotide sequence ID" value="NC_010513.1"/>
</dbReference>
<dbReference type="SMR" id="B0U5Z5"/>
<dbReference type="KEGG" id="xfm:Xfasm12_2214"/>
<dbReference type="HOGENOM" id="CLU_014042_2_0_6"/>
<dbReference type="GO" id="GO:0005737">
    <property type="term" value="C:cytoplasm"/>
    <property type="evidence" value="ECO:0007669"/>
    <property type="project" value="UniProtKB-SubCell"/>
</dbReference>
<dbReference type="GO" id="GO:0052915">
    <property type="term" value="F:23S rRNA (guanine(2445)-N(2))-methyltransferase activity"/>
    <property type="evidence" value="ECO:0007669"/>
    <property type="project" value="UniProtKB-UniRule"/>
</dbReference>
<dbReference type="GO" id="GO:0003723">
    <property type="term" value="F:RNA binding"/>
    <property type="evidence" value="ECO:0007669"/>
    <property type="project" value="UniProtKB-KW"/>
</dbReference>
<dbReference type="GO" id="GO:0070043">
    <property type="term" value="F:rRNA (guanine-N7-)-methyltransferase activity"/>
    <property type="evidence" value="ECO:0007669"/>
    <property type="project" value="UniProtKB-UniRule"/>
</dbReference>
<dbReference type="CDD" id="cd02440">
    <property type="entry name" value="AdoMet_MTases"/>
    <property type="match status" value="1"/>
</dbReference>
<dbReference type="CDD" id="cd11715">
    <property type="entry name" value="THUMP_AdoMetMT"/>
    <property type="match status" value="1"/>
</dbReference>
<dbReference type="FunFam" id="3.30.750.80:FF:000003">
    <property type="entry name" value="Ribosomal RNA large subunit methyltransferase K/L"/>
    <property type="match status" value="1"/>
</dbReference>
<dbReference type="Gene3D" id="3.30.2130.30">
    <property type="match status" value="1"/>
</dbReference>
<dbReference type="Gene3D" id="3.30.750.80">
    <property type="entry name" value="RNA methyltransferase domain (HRMD) like"/>
    <property type="match status" value="1"/>
</dbReference>
<dbReference type="Gene3D" id="3.40.50.150">
    <property type="entry name" value="Vaccinia Virus protein VP39"/>
    <property type="match status" value="2"/>
</dbReference>
<dbReference type="HAMAP" id="MF_01858">
    <property type="entry name" value="23SrRNA_methyltr_KL"/>
    <property type="match status" value="1"/>
</dbReference>
<dbReference type="InterPro" id="IPR017244">
    <property type="entry name" value="23SrRNA_methyltr_KL"/>
</dbReference>
<dbReference type="InterPro" id="IPR000241">
    <property type="entry name" value="RlmKL-like_Mtase"/>
</dbReference>
<dbReference type="InterPro" id="IPR053943">
    <property type="entry name" value="RlmKL-like_Mtase_CS"/>
</dbReference>
<dbReference type="InterPro" id="IPR054170">
    <property type="entry name" value="RlmL_1st"/>
</dbReference>
<dbReference type="InterPro" id="IPR019614">
    <property type="entry name" value="SAM-dep_methyl-trfase"/>
</dbReference>
<dbReference type="InterPro" id="IPR029063">
    <property type="entry name" value="SAM-dependent_MTases_sf"/>
</dbReference>
<dbReference type="InterPro" id="IPR004114">
    <property type="entry name" value="THUMP_dom"/>
</dbReference>
<dbReference type="NCBIfam" id="NF008748">
    <property type="entry name" value="PRK11783.1"/>
    <property type="match status" value="1"/>
</dbReference>
<dbReference type="PANTHER" id="PTHR47313">
    <property type="entry name" value="RIBOSOMAL RNA LARGE SUBUNIT METHYLTRANSFERASE K/L"/>
    <property type="match status" value="1"/>
</dbReference>
<dbReference type="PANTHER" id="PTHR47313:SF1">
    <property type="entry name" value="RIBOSOMAL RNA LARGE SUBUNIT METHYLTRANSFERASE K_L"/>
    <property type="match status" value="1"/>
</dbReference>
<dbReference type="Pfam" id="PF10672">
    <property type="entry name" value="Methyltrans_SAM"/>
    <property type="match status" value="1"/>
</dbReference>
<dbReference type="Pfam" id="PF22020">
    <property type="entry name" value="RlmL_1st"/>
    <property type="match status" value="1"/>
</dbReference>
<dbReference type="Pfam" id="PF02926">
    <property type="entry name" value="THUMP"/>
    <property type="match status" value="1"/>
</dbReference>
<dbReference type="Pfam" id="PF01170">
    <property type="entry name" value="UPF0020"/>
    <property type="match status" value="1"/>
</dbReference>
<dbReference type="PIRSF" id="PIRSF037618">
    <property type="entry name" value="RNA_Mtase_bacteria_prd"/>
    <property type="match status" value="1"/>
</dbReference>
<dbReference type="SMART" id="SM00981">
    <property type="entry name" value="THUMP"/>
    <property type="match status" value="1"/>
</dbReference>
<dbReference type="SUPFAM" id="SSF53335">
    <property type="entry name" value="S-adenosyl-L-methionine-dependent methyltransferases"/>
    <property type="match status" value="2"/>
</dbReference>
<dbReference type="PROSITE" id="PS51165">
    <property type="entry name" value="THUMP"/>
    <property type="match status" value="1"/>
</dbReference>
<dbReference type="PROSITE" id="PS01261">
    <property type="entry name" value="UPF0020"/>
    <property type="match status" value="1"/>
</dbReference>
<protein>
    <recommendedName>
        <fullName evidence="1">Ribosomal RNA large subunit methyltransferase K/L</fullName>
    </recommendedName>
    <domain>
        <recommendedName>
            <fullName evidence="1">23S rRNA m2G2445 methyltransferase</fullName>
            <ecNumber evidence="1">2.1.1.173</ecNumber>
        </recommendedName>
        <alternativeName>
            <fullName evidence="1">rRNA (guanine-N(2)-)-methyltransferase RlmL</fullName>
        </alternativeName>
    </domain>
    <domain>
        <recommendedName>
            <fullName evidence="1">23S rRNA m7G2069 methyltransferase</fullName>
            <ecNumber evidence="1">2.1.1.264</ecNumber>
        </recommendedName>
        <alternativeName>
            <fullName evidence="1">rRNA (guanine-N(7)-)-methyltransferase RlmK</fullName>
        </alternativeName>
    </domain>
</protein>
<evidence type="ECO:0000255" key="1">
    <source>
        <dbReference type="HAMAP-Rule" id="MF_01858"/>
    </source>
</evidence>
<name>RLMKL_XYLFM</name>
<organism>
    <name type="scientific">Xylella fastidiosa (strain M12)</name>
    <dbReference type="NCBI Taxonomy" id="405440"/>
    <lineage>
        <taxon>Bacteria</taxon>
        <taxon>Pseudomonadati</taxon>
        <taxon>Pseudomonadota</taxon>
        <taxon>Gammaproteobacteria</taxon>
        <taxon>Lysobacterales</taxon>
        <taxon>Lysobacteraceae</taxon>
        <taxon>Xylella</taxon>
    </lineage>
</organism>
<keyword id="KW-0963">Cytoplasm</keyword>
<keyword id="KW-0489">Methyltransferase</keyword>
<keyword id="KW-0694">RNA-binding</keyword>
<keyword id="KW-0698">rRNA processing</keyword>
<keyword id="KW-0949">S-adenosyl-L-methionine</keyword>
<keyword id="KW-0808">Transferase</keyword>
<gene>
    <name evidence="1" type="primary">rlmL</name>
    <name type="ordered locus">Xfasm12_2214</name>
</gene>
<proteinExistence type="inferred from homology"/>
<comment type="function">
    <text evidence="1">Specifically methylates the guanine in position 2445 (m2G2445) and the guanine in position 2069 (m7G2069) of 23S rRNA.</text>
</comment>
<comment type="catalytic activity">
    <reaction evidence="1">
        <text>guanosine(2445) in 23S rRNA + S-adenosyl-L-methionine = N(2)-methylguanosine(2445) in 23S rRNA + S-adenosyl-L-homocysteine + H(+)</text>
        <dbReference type="Rhea" id="RHEA:42740"/>
        <dbReference type="Rhea" id="RHEA-COMP:10215"/>
        <dbReference type="Rhea" id="RHEA-COMP:10216"/>
        <dbReference type="ChEBI" id="CHEBI:15378"/>
        <dbReference type="ChEBI" id="CHEBI:57856"/>
        <dbReference type="ChEBI" id="CHEBI:59789"/>
        <dbReference type="ChEBI" id="CHEBI:74269"/>
        <dbReference type="ChEBI" id="CHEBI:74481"/>
        <dbReference type="EC" id="2.1.1.173"/>
    </reaction>
</comment>
<comment type="catalytic activity">
    <reaction evidence="1">
        <text>guanosine(2069) in 23S rRNA + S-adenosyl-L-methionine = N(2)-methylguanosine(2069) in 23S rRNA + S-adenosyl-L-homocysteine + H(+)</text>
        <dbReference type="Rhea" id="RHEA:43772"/>
        <dbReference type="Rhea" id="RHEA-COMP:10688"/>
        <dbReference type="Rhea" id="RHEA-COMP:10689"/>
        <dbReference type="ChEBI" id="CHEBI:15378"/>
        <dbReference type="ChEBI" id="CHEBI:57856"/>
        <dbReference type="ChEBI" id="CHEBI:59789"/>
        <dbReference type="ChEBI" id="CHEBI:74269"/>
        <dbReference type="ChEBI" id="CHEBI:74481"/>
        <dbReference type="EC" id="2.1.1.264"/>
    </reaction>
</comment>
<comment type="subcellular location">
    <subcellularLocation>
        <location evidence="1">Cytoplasm</location>
    </subcellularLocation>
</comment>
<comment type="similarity">
    <text evidence="1">Belongs to the methyltransferase superfamily. RlmKL family.</text>
</comment>
<reference key="1">
    <citation type="journal article" date="2010" name="J. Bacteriol.">
        <title>Whole genome sequences of two Xylella fastidiosa strains (M12 and M23) causing almond leaf scorch disease in California.</title>
        <authorList>
            <person name="Chen J."/>
            <person name="Xie G."/>
            <person name="Han S."/>
            <person name="Chertkov O."/>
            <person name="Sims D."/>
            <person name="Civerolo E.L."/>
        </authorList>
    </citation>
    <scope>NUCLEOTIDE SEQUENCE [LARGE SCALE GENOMIC DNA]</scope>
    <source>
        <strain>M12</strain>
    </source>
</reference>